<feature type="chain" id="PRO_0000054794" description="3-ketodihydrosphingosine reductase TSC10">
    <location>
        <begin position="1"/>
        <end position="335"/>
    </location>
</feature>
<feature type="transmembrane region" description="Helical" evidence="5">
    <location>
        <begin position="288"/>
        <end position="308"/>
    </location>
</feature>
<feature type="region of interest" description="Involved in homodimer formation" evidence="6">
    <location>
        <begin position="141"/>
        <end position="207"/>
    </location>
</feature>
<feature type="short sequence motif" description="GXSXG" evidence="4">
    <location>
        <begin position="42"/>
        <end position="46"/>
    </location>
</feature>
<feature type="active site" description="Proton acceptor" evidence="2">
    <location>
        <position position="190"/>
    </location>
</feature>
<feature type="active site" description="Lowers pKa of active site Tyr" evidence="2">
    <location>
        <position position="194"/>
    </location>
</feature>
<feature type="binding site" evidence="9">
    <location>
        <position position="42"/>
    </location>
    <ligand>
        <name>NADPH</name>
        <dbReference type="ChEBI" id="CHEBI:57783"/>
    </ligand>
</feature>
<feature type="binding site" evidence="9">
    <location>
        <position position="44"/>
    </location>
    <ligand>
        <name>NADPH</name>
        <dbReference type="ChEBI" id="CHEBI:57783"/>
    </ligand>
</feature>
<feature type="binding site" evidence="9">
    <location>
        <position position="45"/>
    </location>
    <ligand>
        <name>NADPH</name>
        <dbReference type="ChEBI" id="CHEBI:57783"/>
    </ligand>
</feature>
<feature type="binding site" evidence="9">
    <location>
        <position position="46"/>
    </location>
    <ligand>
        <name>NADPH</name>
        <dbReference type="ChEBI" id="CHEBI:57783"/>
    </ligand>
</feature>
<feature type="binding site" evidence="9">
    <location>
        <position position="67"/>
    </location>
    <ligand>
        <name>NADPH</name>
        <dbReference type="ChEBI" id="CHEBI:57783"/>
    </ligand>
</feature>
<feature type="binding site" evidence="9">
    <location>
        <position position="68"/>
    </location>
    <ligand>
        <name>NADPH</name>
        <dbReference type="ChEBI" id="CHEBI:57783"/>
    </ligand>
</feature>
<feature type="binding site" evidence="9">
    <location>
        <position position="71"/>
    </location>
    <ligand>
        <name>NADPH</name>
        <dbReference type="ChEBI" id="CHEBI:57783"/>
    </ligand>
</feature>
<feature type="binding site" evidence="9">
    <location>
        <position position="95"/>
    </location>
    <ligand>
        <name>NADPH</name>
        <dbReference type="ChEBI" id="CHEBI:57783"/>
    </ligand>
</feature>
<feature type="binding site" evidence="9">
    <location>
        <position position="96"/>
    </location>
    <ligand>
        <name>NADPH</name>
        <dbReference type="ChEBI" id="CHEBI:57783"/>
    </ligand>
</feature>
<feature type="binding site" evidence="2">
    <location>
        <position position="190"/>
    </location>
    <ligand>
        <name>NADP(+)</name>
        <dbReference type="ChEBI" id="CHEBI:58349"/>
    </ligand>
</feature>
<feature type="binding site" evidence="2">
    <location>
        <position position="194"/>
    </location>
    <ligand>
        <name>NADP(+)</name>
        <dbReference type="ChEBI" id="CHEBI:58349"/>
    </ligand>
</feature>
<feature type="binding site" evidence="1">
    <location>
        <position position="223"/>
    </location>
    <ligand>
        <name>NADP(+)</name>
        <dbReference type="ChEBI" id="CHEBI:58349"/>
    </ligand>
</feature>
<feature type="strand" evidence="10">
    <location>
        <begin position="36"/>
        <end position="41"/>
    </location>
</feature>
<feature type="turn" evidence="10">
    <location>
        <begin position="42"/>
        <end position="44"/>
    </location>
</feature>
<feature type="helix" evidence="10">
    <location>
        <begin position="46"/>
        <end position="58"/>
    </location>
</feature>
<feature type="strand" evidence="10">
    <location>
        <begin position="61"/>
        <end position="67"/>
    </location>
</feature>
<feature type="helix" evidence="10">
    <location>
        <begin position="69"/>
        <end position="82"/>
    </location>
</feature>
<feature type="strand" evidence="10">
    <location>
        <begin position="91"/>
        <end position="93"/>
    </location>
</feature>
<feature type="helix" evidence="10">
    <location>
        <begin position="99"/>
        <end position="108"/>
    </location>
</feature>
<feature type="turn" evidence="10">
    <location>
        <begin position="109"/>
        <end position="115"/>
    </location>
</feature>
<feature type="strand" evidence="10">
    <location>
        <begin position="119"/>
        <end position="123"/>
    </location>
</feature>
<feature type="turn" evidence="10">
    <location>
        <begin position="133"/>
        <end position="135"/>
    </location>
</feature>
<feature type="helix" evidence="10">
    <location>
        <begin position="138"/>
        <end position="148"/>
    </location>
</feature>
<feature type="helix" evidence="10">
    <location>
        <begin position="150"/>
        <end position="166"/>
    </location>
</feature>
<feature type="strand" evidence="10">
    <location>
        <begin position="171"/>
        <end position="175"/>
    </location>
</feature>
<feature type="helix" evidence="10">
    <location>
        <begin position="191"/>
        <end position="207"/>
    </location>
</feature>
<feature type="turn" evidence="10">
    <location>
        <begin position="208"/>
        <end position="212"/>
    </location>
</feature>
<feature type="strand" evidence="10">
    <location>
        <begin position="214"/>
        <end position="218"/>
    </location>
</feature>
<feature type="helix" evidence="10">
    <location>
        <begin position="251"/>
        <end position="263"/>
    </location>
</feature>
<feature type="strand" evidence="10">
    <location>
        <begin position="267"/>
        <end position="269"/>
    </location>
</feature>
<accession>P0CR36</accession>
<accession>Q55NW2</accession>
<accession>Q5KEJ9</accession>
<sequence length="335" mass="36490">MPTPLALLLSAILIIGTYFAMPFWPFRKSNYDPRGKHCYITGGSSGLGKALAERLVKQGAHVTIVGRDSKKAEGVVEELKAIAAPGQIIQCIAADLTSPIASTNAIHAACKPHADQAPDYVYLCAGFSRPKLFVETTKQELKDGLDGVYWVSAYTAHEACQMMSKQRRTGKIIFVASFLSYVSFAGYSSYSPAKYALRGLSDALRSEMLLHNIDIHIFLPCGISGPGFDAENRTKPAVTKKIEEGDTPITPDVCAAALESGLKKGYYQITDNLVTEPIRLRSNGGVPTNNFLLDTLWLIVSSVGVPIWRMTADSAVRSFRAKVEKELEAKGYYVS</sequence>
<evidence type="ECO:0000250" key="1">
    <source>
        <dbReference type="UniProtKB" id="L0E2Z4"/>
    </source>
</evidence>
<evidence type="ECO:0000250" key="2">
    <source>
        <dbReference type="UniProtKB" id="O93868"/>
    </source>
</evidence>
<evidence type="ECO:0000250" key="3">
    <source>
        <dbReference type="UniProtKB" id="P38342"/>
    </source>
</evidence>
<evidence type="ECO:0000250" key="4">
    <source>
        <dbReference type="UniProtKB" id="P40471"/>
    </source>
</evidence>
<evidence type="ECO:0000255" key="5"/>
<evidence type="ECO:0000269" key="6">
    <source>
    </source>
</evidence>
<evidence type="ECO:0000303" key="7">
    <source>
    </source>
</evidence>
<evidence type="ECO:0000305" key="8"/>
<evidence type="ECO:0007744" key="9">
    <source>
        <dbReference type="PDB" id="8JAT"/>
    </source>
</evidence>
<evidence type="ECO:0007829" key="10">
    <source>
        <dbReference type="PDB" id="8JAT"/>
    </source>
</evidence>
<organism>
    <name type="scientific">Cryptococcus neoformans var. neoformans serotype D (strain JEC21 / ATCC MYA-565)</name>
    <name type="common">Filobasidiella neoformans</name>
    <dbReference type="NCBI Taxonomy" id="214684"/>
    <lineage>
        <taxon>Eukaryota</taxon>
        <taxon>Fungi</taxon>
        <taxon>Dikarya</taxon>
        <taxon>Basidiomycota</taxon>
        <taxon>Agaricomycotina</taxon>
        <taxon>Tremellomycetes</taxon>
        <taxon>Tremellales</taxon>
        <taxon>Cryptococcaceae</taxon>
        <taxon>Cryptococcus</taxon>
        <taxon>Cryptococcus neoformans species complex</taxon>
    </lineage>
</organism>
<dbReference type="EC" id="1.1.1.102" evidence="3"/>
<dbReference type="EMBL" id="AE017347">
    <property type="protein sequence ID" value="AAW44453.1"/>
    <property type="molecule type" value="Genomic_DNA"/>
</dbReference>
<dbReference type="RefSeq" id="XP_571760.1">
    <property type="nucleotide sequence ID" value="XM_571760.1"/>
</dbReference>
<dbReference type="PDB" id="8JAT">
    <property type="method" value="X-ray"/>
    <property type="resolution" value="3.20 A"/>
    <property type="chains" value="A=29-293"/>
</dbReference>
<dbReference type="PDBsum" id="8JAT"/>
<dbReference type="SMR" id="P0CR36"/>
<dbReference type="FunCoup" id="P0CR36">
    <property type="interactions" value="102"/>
</dbReference>
<dbReference type="STRING" id="214684.P0CR36"/>
<dbReference type="PaxDb" id="214684-P0CR36"/>
<dbReference type="EnsemblFungi" id="AAW44453">
    <property type="protein sequence ID" value="AAW44453"/>
    <property type="gene ID" value="CNG00270"/>
</dbReference>
<dbReference type="GeneID" id="3258921"/>
<dbReference type="KEGG" id="cne:CNG00270"/>
<dbReference type="VEuPathDB" id="FungiDB:CNG00270"/>
<dbReference type="eggNOG" id="KOG1210">
    <property type="taxonomic scope" value="Eukaryota"/>
</dbReference>
<dbReference type="HOGENOM" id="CLU_010194_3_0_1"/>
<dbReference type="InParanoid" id="P0CR36"/>
<dbReference type="OMA" id="PRQWGFF"/>
<dbReference type="OrthoDB" id="10267115at2759"/>
<dbReference type="UniPathway" id="UPA00222"/>
<dbReference type="Proteomes" id="UP000002149">
    <property type="component" value="Chromosome 7"/>
</dbReference>
<dbReference type="GO" id="GO:0005789">
    <property type="term" value="C:endoplasmic reticulum membrane"/>
    <property type="evidence" value="ECO:0000318"/>
    <property type="project" value="GO_Central"/>
</dbReference>
<dbReference type="GO" id="GO:0047560">
    <property type="term" value="F:3-dehydrosphinganine reductase activity"/>
    <property type="evidence" value="ECO:0000250"/>
    <property type="project" value="UniProtKB"/>
</dbReference>
<dbReference type="GO" id="GO:0070402">
    <property type="term" value="F:NADPH binding"/>
    <property type="evidence" value="ECO:0000314"/>
    <property type="project" value="UniProtKB"/>
</dbReference>
<dbReference type="GO" id="GO:0006666">
    <property type="term" value="P:3-keto-sphinganine metabolic process"/>
    <property type="evidence" value="ECO:0000250"/>
    <property type="project" value="UniProtKB"/>
</dbReference>
<dbReference type="GO" id="GO:0030148">
    <property type="term" value="P:sphingolipid biosynthetic process"/>
    <property type="evidence" value="ECO:0000250"/>
    <property type="project" value="UniProtKB"/>
</dbReference>
<dbReference type="CDD" id="cd08939">
    <property type="entry name" value="KDSR-like_SDR_c"/>
    <property type="match status" value="1"/>
</dbReference>
<dbReference type="FunFam" id="3.40.50.720:FF:000763">
    <property type="entry name" value="Unplaced genomic scaffold supercont1.203, whole genome shotgun sequence"/>
    <property type="match status" value="1"/>
</dbReference>
<dbReference type="Gene3D" id="3.40.50.720">
    <property type="entry name" value="NAD(P)-binding Rossmann-like Domain"/>
    <property type="match status" value="1"/>
</dbReference>
<dbReference type="InterPro" id="IPR045022">
    <property type="entry name" value="KDSR-like"/>
</dbReference>
<dbReference type="InterPro" id="IPR036291">
    <property type="entry name" value="NAD(P)-bd_dom_sf"/>
</dbReference>
<dbReference type="InterPro" id="IPR002347">
    <property type="entry name" value="SDR_fam"/>
</dbReference>
<dbReference type="PANTHER" id="PTHR43550">
    <property type="entry name" value="3-KETODIHYDROSPHINGOSINE REDUCTASE"/>
    <property type="match status" value="1"/>
</dbReference>
<dbReference type="PANTHER" id="PTHR43550:SF3">
    <property type="entry name" value="3-KETODIHYDROSPHINGOSINE REDUCTASE"/>
    <property type="match status" value="1"/>
</dbReference>
<dbReference type="Pfam" id="PF00106">
    <property type="entry name" value="adh_short"/>
    <property type="match status" value="1"/>
</dbReference>
<dbReference type="PRINTS" id="PR00081">
    <property type="entry name" value="GDHRDH"/>
</dbReference>
<dbReference type="SMART" id="SM00822">
    <property type="entry name" value="PKS_KR"/>
    <property type="match status" value="1"/>
</dbReference>
<dbReference type="SUPFAM" id="SSF51735">
    <property type="entry name" value="NAD(P)-binding Rossmann-fold domains"/>
    <property type="match status" value="1"/>
</dbReference>
<comment type="function">
    <text evidence="3">Catalyzes the reduction of 3'-oxosphinganine (3-ketodihydrosphingosine/KDS) to sphinganine (dihydrosphingosine/DHS), the second step of de novo sphingolipid biosynthesis.</text>
</comment>
<comment type="catalytic activity">
    <reaction evidence="3">
        <text>sphinganine + NADP(+) = 3-oxosphinganine + NADPH + H(+)</text>
        <dbReference type="Rhea" id="RHEA:22640"/>
        <dbReference type="ChEBI" id="CHEBI:15378"/>
        <dbReference type="ChEBI" id="CHEBI:57783"/>
        <dbReference type="ChEBI" id="CHEBI:57817"/>
        <dbReference type="ChEBI" id="CHEBI:58299"/>
        <dbReference type="ChEBI" id="CHEBI:58349"/>
        <dbReference type="EC" id="1.1.1.102"/>
    </reaction>
    <physiologicalReaction direction="right-to-left" evidence="3">
        <dbReference type="Rhea" id="RHEA:22642"/>
    </physiologicalReaction>
</comment>
<comment type="pathway">
    <text>Lipid metabolism; sphingolipid metabolism.</text>
</comment>
<comment type="subunit">
    <text evidence="6">Homodimer; a minor portion forms homotetramers.</text>
</comment>
<comment type="subcellular location">
    <subcellularLocation>
        <location evidence="3">Endoplasmic reticulum membrane</location>
        <topology evidence="8">Single-pass membrane protein</topology>
    </subcellularLocation>
</comment>
<comment type="similarity">
    <text evidence="8">Belongs to the short-chain dehydrogenases/reductases (SDR) family.</text>
</comment>
<gene>
    <name type="primary">TSC10</name>
    <name type="ordered locus">CNG00270</name>
</gene>
<proteinExistence type="evidence at protein level"/>
<protein>
    <recommendedName>
        <fullName>3-ketodihydrosphingosine reductase TSC10</fullName>
        <ecNumber evidence="3">1.1.1.102</ecNumber>
    </recommendedName>
    <alternativeName>
        <fullName>3-dehydrosphinganine reductase</fullName>
    </alternativeName>
    <alternativeName>
        <fullName evidence="7">CnTSC10</fullName>
    </alternativeName>
    <alternativeName>
        <fullName>KDS reductase</fullName>
    </alternativeName>
</protein>
<name>KDSR_CRYNJ</name>
<reference key="1">
    <citation type="journal article" date="2005" name="Science">
        <title>The genome of the basidiomycetous yeast and human pathogen Cryptococcus neoformans.</title>
        <authorList>
            <person name="Loftus B.J."/>
            <person name="Fung E."/>
            <person name="Roncaglia P."/>
            <person name="Rowley D."/>
            <person name="Amedeo P."/>
            <person name="Bruno D."/>
            <person name="Vamathevan J."/>
            <person name="Miranda M."/>
            <person name="Anderson I.J."/>
            <person name="Fraser J.A."/>
            <person name="Allen J.E."/>
            <person name="Bosdet I.E."/>
            <person name="Brent M.R."/>
            <person name="Chiu R."/>
            <person name="Doering T.L."/>
            <person name="Donlin M.J."/>
            <person name="D'Souza C.A."/>
            <person name="Fox D.S."/>
            <person name="Grinberg V."/>
            <person name="Fu J."/>
            <person name="Fukushima M."/>
            <person name="Haas B.J."/>
            <person name="Huang J.C."/>
            <person name="Janbon G."/>
            <person name="Jones S.J.M."/>
            <person name="Koo H.L."/>
            <person name="Krzywinski M.I."/>
            <person name="Kwon-Chung K.J."/>
            <person name="Lengeler K.B."/>
            <person name="Maiti R."/>
            <person name="Marra M.A."/>
            <person name="Marra R.E."/>
            <person name="Mathewson C.A."/>
            <person name="Mitchell T.G."/>
            <person name="Pertea M."/>
            <person name="Riggs F.R."/>
            <person name="Salzberg S.L."/>
            <person name="Schein J.E."/>
            <person name="Shvartsbeyn A."/>
            <person name="Shin H."/>
            <person name="Shumway M."/>
            <person name="Specht C.A."/>
            <person name="Suh B.B."/>
            <person name="Tenney A."/>
            <person name="Utterback T.R."/>
            <person name="Wickes B.L."/>
            <person name="Wortman J.R."/>
            <person name="Wye N.H."/>
            <person name="Kronstad J.W."/>
            <person name="Lodge J.K."/>
            <person name="Heitman J."/>
            <person name="Davis R.W."/>
            <person name="Fraser C.M."/>
            <person name="Hyman R.W."/>
        </authorList>
    </citation>
    <scope>NUCLEOTIDE SEQUENCE [LARGE SCALE GENOMIC DNA]</scope>
    <source>
        <strain>JEC21 / ATCC MYA-565</strain>
    </source>
</reference>
<reference evidence="9" key="2">
    <citation type="journal article" date="2023" name="Biochem. Biophys. Res. Commun.">
        <title>Crystal structure of the 3-ketodihydrosphingosine reductase TSC10 from Cryptococcus neoformans.</title>
        <authorList>
            <person name="Zhao P."/>
            <person name="Zhuang Z."/>
            <person name="Guan X."/>
            <person name="Yang J."/>
            <person name="Wang W."/>
            <person name="Kuang Z."/>
        </authorList>
    </citation>
    <scope>X-RAY CRYSTALLOGRAPHY (3.20 ANGSTROMS) OF 29-293 IN COMPLEX WITH NADPH</scope>
    <scope>SUBUNIT</scope>
</reference>
<keyword id="KW-0002">3D-structure</keyword>
<keyword id="KW-0256">Endoplasmic reticulum</keyword>
<keyword id="KW-0443">Lipid metabolism</keyword>
<keyword id="KW-0472">Membrane</keyword>
<keyword id="KW-0521">NADP</keyword>
<keyword id="KW-0547">Nucleotide-binding</keyword>
<keyword id="KW-0560">Oxidoreductase</keyword>
<keyword id="KW-1185">Reference proteome</keyword>
<keyword id="KW-0746">Sphingolipid metabolism</keyword>
<keyword id="KW-0812">Transmembrane</keyword>
<keyword id="KW-1133">Transmembrane helix</keyword>